<gene>
    <name type="primary">fslL</name>
    <name type="ORF">DDB_G0284585</name>
</gene>
<organism>
    <name type="scientific">Dictyostelium discoideum</name>
    <name type="common">Social amoeba</name>
    <dbReference type="NCBI Taxonomy" id="44689"/>
    <lineage>
        <taxon>Eukaryota</taxon>
        <taxon>Amoebozoa</taxon>
        <taxon>Evosea</taxon>
        <taxon>Eumycetozoa</taxon>
        <taxon>Dictyostelia</taxon>
        <taxon>Dictyosteliales</taxon>
        <taxon>Dictyosteliaceae</taxon>
        <taxon>Dictyostelium</taxon>
    </lineage>
</organism>
<dbReference type="EMBL" id="AAFI02000067">
    <property type="protein sequence ID" value="EAL65147.1"/>
    <property type="molecule type" value="Genomic_DNA"/>
</dbReference>
<dbReference type="RefSeq" id="XP_638502.1">
    <property type="nucleotide sequence ID" value="XM_633410.1"/>
</dbReference>
<dbReference type="SMR" id="Q54PF8"/>
<dbReference type="FunCoup" id="Q54PF8">
    <property type="interactions" value="20"/>
</dbReference>
<dbReference type="GlyCosmos" id="Q54PF8">
    <property type="glycosylation" value="7 sites, No reported glycans"/>
</dbReference>
<dbReference type="GlyGen" id="Q54PF8">
    <property type="glycosylation" value="7 sites"/>
</dbReference>
<dbReference type="PaxDb" id="44689-DDB0232047"/>
<dbReference type="EnsemblProtists" id="EAL65147">
    <property type="protein sequence ID" value="EAL65147"/>
    <property type="gene ID" value="DDB_G0284585"/>
</dbReference>
<dbReference type="GeneID" id="8624666"/>
<dbReference type="KEGG" id="ddi:DDB_G0284585"/>
<dbReference type="dictyBase" id="DDB_G0284585">
    <property type="gene designation" value="fslL"/>
</dbReference>
<dbReference type="VEuPathDB" id="AmoebaDB:DDB_G0284585"/>
<dbReference type="eggNOG" id="ENOG502RF31">
    <property type="taxonomic scope" value="Eukaryota"/>
</dbReference>
<dbReference type="HOGENOM" id="CLU_030318_0_0_1"/>
<dbReference type="InParanoid" id="Q54PF8"/>
<dbReference type="OMA" id="IFCIRIY"/>
<dbReference type="PhylomeDB" id="Q54PF8"/>
<dbReference type="PRO" id="PR:Q54PF8"/>
<dbReference type="Proteomes" id="UP000002195">
    <property type="component" value="Chromosome 4"/>
</dbReference>
<dbReference type="GO" id="GO:0016020">
    <property type="term" value="C:membrane"/>
    <property type="evidence" value="ECO:0007669"/>
    <property type="project" value="UniProtKB-SubCell"/>
</dbReference>
<dbReference type="GO" id="GO:0004888">
    <property type="term" value="F:transmembrane signaling receptor activity"/>
    <property type="evidence" value="ECO:0007669"/>
    <property type="project" value="InterPro"/>
</dbReference>
<dbReference type="GO" id="GO:0007166">
    <property type="term" value="P:cell surface receptor signaling pathway"/>
    <property type="evidence" value="ECO:0007669"/>
    <property type="project" value="InterPro"/>
</dbReference>
<dbReference type="CDD" id="cd07066">
    <property type="entry name" value="CRD_FZ"/>
    <property type="match status" value="1"/>
</dbReference>
<dbReference type="Gene3D" id="1.20.1070.10">
    <property type="entry name" value="Rhodopsin 7-helix transmembrane proteins"/>
    <property type="match status" value="1"/>
</dbReference>
<dbReference type="InterPro" id="IPR020067">
    <property type="entry name" value="Frizzled_dom"/>
</dbReference>
<dbReference type="InterPro" id="IPR017981">
    <property type="entry name" value="GPCR_2-like_7TM"/>
</dbReference>
<dbReference type="InterPro" id="IPR050949">
    <property type="entry name" value="GPCR_Fz/Smo-like"/>
</dbReference>
<dbReference type="PANTHER" id="PTHR31787:SF10">
    <property type="entry name" value="FRIZZLED AND SMOOTHENED-LIKE PROTEIN L-RELATED"/>
    <property type="match status" value="1"/>
</dbReference>
<dbReference type="PANTHER" id="PTHR31787">
    <property type="entry name" value="G-PROTEIN-COUPLED RECEPTOR GPCR FAMILY PROTEIN"/>
    <property type="match status" value="1"/>
</dbReference>
<dbReference type="SUPFAM" id="SSF81321">
    <property type="entry name" value="Family A G protein-coupled receptor-like"/>
    <property type="match status" value="1"/>
</dbReference>
<dbReference type="PROSITE" id="PS50038">
    <property type="entry name" value="FZ"/>
    <property type="match status" value="1"/>
</dbReference>
<dbReference type="PROSITE" id="PS50261">
    <property type="entry name" value="G_PROTEIN_RECEP_F2_4"/>
    <property type="match status" value="1"/>
</dbReference>
<protein>
    <recommendedName>
        <fullName>Frizzled and smoothened-like protein L</fullName>
    </recommendedName>
</protein>
<accession>Q54PF8</accession>
<sequence>MITNKSKYYFFLILIFINFYLINCQEEYPIDQTGKCEPYIGDSQITKCSTFLPNINSIYVSANSTQKDSMKTLDNYFGLLLAVGSEKCKDSSLTYQTLCSMYLKECESFTDNSTLKTVSIPKRICRKTCNDVTKLCNIESLFNCSQNEPINNLPLCPLNYSIYDLSLVNGDSNYELQCYSPLSNDSIEIPVTNYCPFPLIYINSTDHSADEDRGYMFVSGNSNCVVPNPVPLYTPKQWDRLYDLSNSLSVLSCVGTLFLLFTFNILNKKINRFDRMNSLFNGSVFMMSLSGVIILFAGGPRALIKDGGARISVWQDPLCSATGFIFQLFSIAAILFWVVMSFELWYKIKFMTKKLDLKKYYIPFIIIVSLVFSIIPLATKNYRMIRGNMHCWVHTTKLQNSLFWIPLGIAITIGTIFIGLVMFEIHRIVSANSKGGVLKLEIKSILNVALIYLTFIYLFAFNFYMNGQEGVVYGQIESFYQCTLENDASECTIQGPSIGSLGFFIFCIRIYGVYCFILQGLNYRAYNIWKESIFFNNRFVSYIKNNILNIETSSTGSGGTSTTASATTTTTTKKHNGIDSLNIDSAFSKNNESDDEDDYDPYKKSKNNITLKDIEVSKS</sequence>
<keyword id="KW-1015">Disulfide bond</keyword>
<keyword id="KW-0325">Glycoprotein</keyword>
<keyword id="KW-0472">Membrane</keyword>
<keyword id="KW-0675">Receptor</keyword>
<keyword id="KW-1185">Reference proteome</keyword>
<keyword id="KW-0732">Signal</keyword>
<keyword id="KW-0812">Transmembrane</keyword>
<keyword id="KW-1133">Transmembrane helix</keyword>
<feature type="signal peptide" evidence="1">
    <location>
        <begin position="1"/>
        <end position="24"/>
    </location>
</feature>
<feature type="chain" id="PRO_0000371373" description="Frizzled and smoothened-like protein L">
    <location>
        <begin position="25"/>
        <end position="619"/>
    </location>
</feature>
<feature type="topological domain" description="Extracellular" evidence="1">
    <location>
        <begin position="25"/>
        <end position="245"/>
    </location>
</feature>
<feature type="transmembrane region" description="Helical; Name=1" evidence="1">
    <location>
        <begin position="246"/>
        <end position="266"/>
    </location>
</feature>
<feature type="topological domain" description="Cytoplasmic" evidence="1">
    <location>
        <begin position="267"/>
        <end position="278"/>
    </location>
</feature>
<feature type="transmembrane region" description="Helical; Name=2" evidence="1">
    <location>
        <begin position="279"/>
        <end position="299"/>
    </location>
</feature>
<feature type="topological domain" description="Extracellular" evidence="1">
    <location>
        <begin position="300"/>
        <end position="321"/>
    </location>
</feature>
<feature type="transmembrane region" description="Helical; Name=3" evidence="1">
    <location>
        <begin position="322"/>
        <end position="342"/>
    </location>
</feature>
<feature type="topological domain" description="Cytoplasmic" evidence="1">
    <location>
        <begin position="343"/>
        <end position="358"/>
    </location>
</feature>
<feature type="transmembrane region" description="Helical; Name=4" evidence="1">
    <location>
        <begin position="359"/>
        <end position="379"/>
    </location>
</feature>
<feature type="topological domain" description="Extracellular" evidence="1">
    <location>
        <begin position="380"/>
        <end position="402"/>
    </location>
</feature>
<feature type="transmembrane region" description="Helical; Name=5" evidence="1">
    <location>
        <begin position="403"/>
        <end position="423"/>
    </location>
</feature>
<feature type="topological domain" description="Cytoplasmic" evidence="1">
    <location>
        <begin position="424"/>
        <end position="444"/>
    </location>
</feature>
<feature type="transmembrane region" description="Helical; Name=6" evidence="1">
    <location>
        <begin position="445"/>
        <end position="465"/>
    </location>
</feature>
<feature type="topological domain" description="Extracellular" evidence="1">
    <location>
        <begin position="466"/>
        <end position="497"/>
    </location>
</feature>
<feature type="transmembrane region" description="Helical; Name=7" evidence="1">
    <location>
        <begin position="498"/>
        <end position="518"/>
    </location>
</feature>
<feature type="topological domain" description="Cytoplasmic" evidence="1">
    <location>
        <begin position="519"/>
        <end position="619"/>
    </location>
</feature>
<feature type="domain" description="FZ" evidence="2">
    <location>
        <begin position="31"/>
        <end position="169"/>
    </location>
</feature>
<feature type="region of interest" description="Disordered" evidence="3">
    <location>
        <begin position="581"/>
        <end position="605"/>
    </location>
</feature>
<feature type="glycosylation site" description="N-linked (GlcNAc...) asparagine" evidence="1">
    <location>
        <position position="4"/>
    </location>
</feature>
<feature type="glycosylation site" description="N-linked (GlcNAc...) asparagine" evidence="1">
    <location>
        <position position="63"/>
    </location>
</feature>
<feature type="glycosylation site" description="N-linked (GlcNAc...) asparagine" evidence="1">
    <location>
        <position position="112"/>
    </location>
</feature>
<feature type="glycosylation site" description="N-linked (GlcNAc...) asparagine" evidence="1">
    <location>
        <position position="143"/>
    </location>
</feature>
<feature type="glycosylation site" description="N-linked (GlcNAc...) asparagine" evidence="1">
    <location>
        <position position="159"/>
    </location>
</feature>
<feature type="glycosylation site" description="N-linked (GlcNAc...) asparagine" evidence="1">
    <location>
        <position position="184"/>
    </location>
</feature>
<feature type="glycosylation site" description="N-linked (GlcNAc...) asparagine" evidence="1">
    <location>
        <position position="203"/>
    </location>
</feature>
<feature type="disulfide bond" evidence="2">
    <location>
        <begin position="36"/>
        <end position="106"/>
    </location>
</feature>
<feature type="disulfide bond" evidence="2">
    <location>
        <begin position="48"/>
        <end position="99"/>
    </location>
</feature>
<comment type="subcellular location">
    <subcellularLocation>
        <location evidence="4">Membrane</location>
        <topology evidence="4">Multi-pass membrane protein</topology>
    </subcellularLocation>
</comment>
<comment type="similarity">
    <text evidence="4">Belongs to the G-protein coupled receptor Fz/Smo family.</text>
</comment>
<name>FSLL_DICDI</name>
<reference key="1">
    <citation type="journal article" date="2005" name="Nature">
        <title>The genome of the social amoeba Dictyostelium discoideum.</title>
        <authorList>
            <person name="Eichinger L."/>
            <person name="Pachebat J.A."/>
            <person name="Gloeckner G."/>
            <person name="Rajandream M.A."/>
            <person name="Sucgang R."/>
            <person name="Berriman M."/>
            <person name="Song J."/>
            <person name="Olsen R."/>
            <person name="Szafranski K."/>
            <person name="Xu Q."/>
            <person name="Tunggal B."/>
            <person name="Kummerfeld S."/>
            <person name="Madera M."/>
            <person name="Konfortov B.A."/>
            <person name="Rivero F."/>
            <person name="Bankier A.T."/>
            <person name="Lehmann R."/>
            <person name="Hamlin N."/>
            <person name="Davies R."/>
            <person name="Gaudet P."/>
            <person name="Fey P."/>
            <person name="Pilcher K."/>
            <person name="Chen G."/>
            <person name="Saunders D."/>
            <person name="Sodergren E.J."/>
            <person name="Davis P."/>
            <person name="Kerhornou A."/>
            <person name="Nie X."/>
            <person name="Hall N."/>
            <person name="Anjard C."/>
            <person name="Hemphill L."/>
            <person name="Bason N."/>
            <person name="Farbrother P."/>
            <person name="Desany B."/>
            <person name="Just E."/>
            <person name="Morio T."/>
            <person name="Rost R."/>
            <person name="Churcher C.M."/>
            <person name="Cooper J."/>
            <person name="Haydock S."/>
            <person name="van Driessche N."/>
            <person name="Cronin A."/>
            <person name="Goodhead I."/>
            <person name="Muzny D.M."/>
            <person name="Mourier T."/>
            <person name="Pain A."/>
            <person name="Lu M."/>
            <person name="Harper D."/>
            <person name="Lindsay R."/>
            <person name="Hauser H."/>
            <person name="James K.D."/>
            <person name="Quiles M."/>
            <person name="Madan Babu M."/>
            <person name="Saito T."/>
            <person name="Buchrieser C."/>
            <person name="Wardroper A."/>
            <person name="Felder M."/>
            <person name="Thangavelu M."/>
            <person name="Johnson D."/>
            <person name="Knights A."/>
            <person name="Loulseged H."/>
            <person name="Mungall K.L."/>
            <person name="Oliver K."/>
            <person name="Price C."/>
            <person name="Quail M.A."/>
            <person name="Urushihara H."/>
            <person name="Hernandez J."/>
            <person name="Rabbinowitsch E."/>
            <person name="Steffen D."/>
            <person name="Sanders M."/>
            <person name="Ma J."/>
            <person name="Kohara Y."/>
            <person name="Sharp S."/>
            <person name="Simmonds M.N."/>
            <person name="Spiegler S."/>
            <person name="Tivey A."/>
            <person name="Sugano S."/>
            <person name="White B."/>
            <person name="Walker D."/>
            <person name="Woodward J.R."/>
            <person name="Winckler T."/>
            <person name="Tanaka Y."/>
            <person name="Shaulsky G."/>
            <person name="Schleicher M."/>
            <person name="Weinstock G.M."/>
            <person name="Rosenthal A."/>
            <person name="Cox E.C."/>
            <person name="Chisholm R.L."/>
            <person name="Gibbs R.A."/>
            <person name="Loomis W.F."/>
            <person name="Platzer M."/>
            <person name="Kay R.R."/>
            <person name="Williams J.G."/>
            <person name="Dear P.H."/>
            <person name="Noegel A.A."/>
            <person name="Barrell B.G."/>
            <person name="Kuspa A."/>
        </authorList>
    </citation>
    <scope>NUCLEOTIDE SEQUENCE [LARGE SCALE GENOMIC DNA]</scope>
    <source>
        <strain>AX4</strain>
    </source>
</reference>
<reference key="2">
    <citation type="journal article" date="2006" name="Eur. J. Cell Biol.">
        <title>The Dictyostelium repertoire of seven transmembrane domain receptors.</title>
        <authorList>
            <person name="Prabhu Y."/>
            <person name="Eichinger L."/>
        </authorList>
    </citation>
    <scope>NOMENCLATURE</scope>
</reference>
<proteinExistence type="inferred from homology"/>
<evidence type="ECO:0000255" key="1"/>
<evidence type="ECO:0000255" key="2">
    <source>
        <dbReference type="PROSITE-ProRule" id="PRU00090"/>
    </source>
</evidence>
<evidence type="ECO:0000256" key="3">
    <source>
        <dbReference type="SAM" id="MobiDB-lite"/>
    </source>
</evidence>
<evidence type="ECO:0000305" key="4"/>